<organism>
    <name type="scientific">Pongo abelii</name>
    <name type="common">Sumatran orangutan</name>
    <name type="synonym">Pongo pygmaeus abelii</name>
    <dbReference type="NCBI Taxonomy" id="9601"/>
    <lineage>
        <taxon>Eukaryota</taxon>
        <taxon>Metazoa</taxon>
        <taxon>Chordata</taxon>
        <taxon>Craniata</taxon>
        <taxon>Vertebrata</taxon>
        <taxon>Euteleostomi</taxon>
        <taxon>Mammalia</taxon>
        <taxon>Eutheria</taxon>
        <taxon>Euarchontoglires</taxon>
        <taxon>Primates</taxon>
        <taxon>Haplorrhini</taxon>
        <taxon>Catarrhini</taxon>
        <taxon>Hominidae</taxon>
        <taxon>Pongo</taxon>
    </lineage>
</organism>
<accession>Q5RBQ9</accession>
<accession>Q5R4K7</accession>
<sequence>MAASLGQVLALVLVAALWGGTQPLLKRASAALQRVREPTWVRQLLQEMQTLFLNTEYLMPFLLNQCGSLLYYLTLASTDLTLAVPICNSLAIIFTLIVGKALGEDIGGKRAVAGMVLTVIGISLCITSSWQVPWTAELQLHGKGQLQTLSQKCKREASGAQSERFG</sequence>
<keyword id="KW-0025">Alternative splicing</keyword>
<keyword id="KW-0472">Membrane</keyword>
<keyword id="KW-1185">Reference proteome</keyword>
<keyword id="KW-0812">Transmembrane</keyword>
<keyword id="KW-1133">Transmembrane helix</keyword>
<dbReference type="EMBL" id="CR858579">
    <property type="protein sequence ID" value="CAH90801.1"/>
    <property type="molecule type" value="mRNA"/>
</dbReference>
<dbReference type="EMBL" id="CR861239">
    <property type="protein sequence ID" value="CAH93309.1"/>
    <property type="status" value="ALT_TERM"/>
    <property type="molecule type" value="mRNA"/>
</dbReference>
<dbReference type="RefSeq" id="NP_001128785.1">
    <molecule id="Q5RBQ9-1"/>
    <property type="nucleotide sequence ID" value="NM_001135313.1"/>
</dbReference>
<dbReference type="FunCoup" id="Q5RBQ9">
    <property type="interactions" value="199"/>
</dbReference>
<dbReference type="GeneID" id="100189688"/>
<dbReference type="KEGG" id="pon:100189688"/>
<dbReference type="CTD" id="56063"/>
<dbReference type="eggNOG" id="KOG4831">
    <property type="taxonomic scope" value="Eukaryota"/>
</dbReference>
<dbReference type="InParanoid" id="Q5RBQ9"/>
<dbReference type="OrthoDB" id="43458at2759"/>
<dbReference type="Proteomes" id="UP000001595">
    <property type="component" value="Unplaced"/>
</dbReference>
<dbReference type="GO" id="GO:0016020">
    <property type="term" value="C:membrane"/>
    <property type="evidence" value="ECO:0007669"/>
    <property type="project" value="UniProtKB-SubCell"/>
</dbReference>
<dbReference type="InterPro" id="IPR018908">
    <property type="entry name" value="TMEM234"/>
</dbReference>
<dbReference type="PANTHER" id="PTHR28668">
    <property type="entry name" value="TRANSMEMBRANE PROTEIN 234"/>
    <property type="match status" value="1"/>
</dbReference>
<dbReference type="PANTHER" id="PTHR28668:SF1">
    <property type="entry name" value="TRANSMEMBRANE PROTEIN 234"/>
    <property type="match status" value="1"/>
</dbReference>
<dbReference type="Pfam" id="PF10639">
    <property type="entry name" value="TMEM234"/>
    <property type="match status" value="1"/>
</dbReference>
<dbReference type="SUPFAM" id="SSF103481">
    <property type="entry name" value="Multidrug resistance efflux transporter EmrE"/>
    <property type="match status" value="1"/>
</dbReference>
<reference key="1">
    <citation type="submission" date="2004-11" db="EMBL/GenBank/DDBJ databases">
        <authorList>
            <consortium name="The German cDNA consortium"/>
        </authorList>
    </citation>
    <scope>NUCLEOTIDE SEQUENCE [LARGE SCALE MRNA] (ISOFORMS 1 AND 2)</scope>
    <source>
        <tissue>Brain cortex</tissue>
        <tissue>Kidney</tissue>
    </source>
</reference>
<comment type="subcellular location">
    <subcellularLocation>
        <location evidence="3">Membrane</location>
        <topology evidence="3">Multi-pass membrane protein</topology>
    </subcellularLocation>
</comment>
<comment type="alternative products">
    <event type="alternative splicing"/>
    <isoform>
        <id>Q5RBQ9-1</id>
        <name>1</name>
        <sequence type="displayed"/>
    </isoform>
    <isoform>
        <id>Q5RBQ9-2</id>
        <name>2</name>
        <sequence type="described" ref="VSP_028110 VSP_028111 VSP_028112"/>
    </isoform>
</comment>
<comment type="similarity">
    <text evidence="3">Belongs to the TMEM234 family.</text>
</comment>
<gene>
    <name type="primary">TMEM234</name>
</gene>
<evidence type="ECO:0000255" key="1"/>
<evidence type="ECO:0000303" key="2">
    <source ref="1"/>
</evidence>
<evidence type="ECO:0000305" key="3"/>
<protein>
    <recommendedName>
        <fullName>Transmembrane protein 234</fullName>
    </recommendedName>
</protein>
<feature type="chain" id="PRO_0000304698" description="Transmembrane protein 234">
    <location>
        <begin position="1"/>
        <end position="166"/>
    </location>
</feature>
<feature type="transmembrane region" description="Helical" evidence="1">
    <location>
        <begin position="1"/>
        <end position="21"/>
    </location>
</feature>
<feature type="transmembrane region" description="Helical" evidence="1">
    <location>
        <begin position="82"/>
        <end position="102"/>
    </location>
</feature>
<feature type="transmembrane region" description="Helical" evidence="1">
    <location>
        <begin position="112"/>
        <end position="132"/>
    </location>
</feature>
<feature type="splice variant" id="VSP_028110" description="In isoform 2." evidence="2">
    <location>
        <begin position="110"/>
        <end position="111"/>
    </location>
</feature>
<feature type="splice variant" id="VSP_028111" description="In isoform 2." evidence="2">
    <original>WQVP</original>
    <variation>LSSC</variation>
    <location>
        <begin position="130"/>
        <end position="133"/>
    </location>
</feature>
<feature type="splice variant" id="VSP_028112" description="In isoform 2." evidence="2">
    <location>
        <begin position="134"/>
        <end position="166"/>
    </location>
</feature>
<feature type="sequence conflict" description="In Ref. 1; CAH93309." evidence="3" ref="1">
    <original>Q</original>
    <variation>K</variation>
    <location>
        <position position="49"/>
    </location>
</feature>
<name>TM234_PONAB</name>
<proteinExistence type="evidence at transcript level"/>